<keyword id="KW-1003">Cell membrane</keyword>
<keyword id="KW-0407">Ion channel</keyword>
<keyword id="KW-0406">Ion transport</keyword>
<keyword id="KW-0472">Membrane</keyword>
<keyword id="KW-0479">Metal-binding</keyword>
<keyword id="KW-0915">Sodium</keyword>
<keyword id="KW-0812">Transmembrane</keyword>
<keyword id="KW-1133">Transmembrane helix</keyword>
<keyword id="KW-0813">Transport</keyword>
<dbReference type="EMBL" id="AE017283">
    <property type="protein sequence ID" value="AAT82527.1"/>
    <property type="molecule type" value="Genomic_DNA"/>
</dbReference>
<dbReference type="RefSeq" id="WP_002515225.1">
    <property type="nucleotide sequence ID" value="NZ_CP025935.1"/>
</dbReference>
<dbReference type="SMR" id="Q6A9N9"/>
<dbReference type="EnsemblBacteria" id="AAT82527">
    <property type="protein sequence ID" value="AAT82527"/>
    <property type="gene ID" value="PPA0771"/>
</dbReference>
<dbReference type="KEGG" id="pac:PPA0771"/>
<dbReference type="eggNOG" id="COG0239">
    <property type="taxonomic scope" value="Bacteria"/>
</dbReference>
<dbReference type="HOGENOM" id="CLU_114342_2_0_11"/>
<dbReference type="Proteomes" id="UP000000603">
    <property type="component" value="Chromosome"/>
</dbReference>
<dbReference type="GO" id="GO:0005886">
    <property type="term" value="C:plasma membrane"/>
    <property type="evidence" value="ECO:0007669"/>
    <property type="project" value="UniProtKB-SubCell"/>
</dbReference>
<dbReference type="GO" id="GO:0062054">
    <property type="term" value="F:fluoride channel activity"/>
    <property type="evidence" value="ECO:0007669"/>
    <property type="project" value="UniProtKB-UniRule"/>
</dbReference>
<dbReference type="GO" id="GO:0046872">
    <property type="term" value="F:metal ion binding"/>
    <property type="evidence" value="ECO:0007669"/>
    <property type="project" value="UniProtKB-KW"/>
</dbReference>
<dbReference type="GO" id="GO:0140114">
    <property type="term" value="P:cellular detoxification of fluoride"/>
    <property type="evidence" value="ECO:0007669"/>
    <property type="project" value="UniProtKB-UniRule"/>
</dbReference>
<dbReference type="HAMAP" id="MF_00454">
    <property type="entry name" value="FluC"/>
    <property type="match status" value="1"/>
</dbReference>
<dbReference type="InterPro" id="IPR003691">
    <property type="entry name" value="FluC"/>
</dbReference>
<dbReference type="PANTHER" id="PTHR28259">
    <property type="entry name" value="FLUORIDE EXPORT PROTEIN 1-RELATED"/>
    <property type="match status" value="1"/>
</dbReference>
<dbReference type="PANTHER" id="PTHR28259:SF1">
    <property type="entry name" value="FLUORIDE EXPORT PROTEIN 1-RELATED"/>
    <property type="match status" value="1"/>
</dbReference>
<dbReference type="Pfam" id="PF02537">
    <property type="entry name" value="CRCB"/>
    <property type="match status" value="1"/>
</dbReference>
<comment type="function">
    <text evidence="1">Fluoride-specific ion channel. Important for reducing fluoride concentration in the cell, thus reducing its toxicity.</text>
</comment>
<comment type="catalytic activity">
    <reaction evidence="1">
        <text>fluoride(in) = fluoride(out)</text>
        <dbReference type="Rhea" id="RHEA:76159"/>
        <dbReference type="ChEBI" id="CHEBI:17051"/>
    </reaction>
    <physiologicalReaction direction="left-to-right" evidence="1">
        <dbReference type="Rhea" id="RHEA:76160"/>
    </physiologicalReaction>
</comment>
<comment type="activity regulation">
    <text evidence="1">Na(+) is not transported, but it plays an essential structural role and its presence is essential for fluoride channel function.</text>
</comment>
<comment type="subcellular location">
    <subcellularLocation>
        <location evidence="1">Cell membrane</location>
        <topology evidence="1">Multi-pass membrane protein</topology>
    </subcellularLocation>
</comment>
<comment type="similarity">
    <text evidence="1">Belongs to the fluoride channel Fluc/FEX (TC 1.A.43) family.</text>
</comment>
<evidence type="ECO:0000255" key="1">
    <source>
        <dbReference type="HAMAP-Rule" id="MF_00454"/>
    </source>
</evidence>
<proteinExistence type="inferred from homology"/>
<reference key="1">
    <citation type="journal article" date="2004" name="Science">
        <title>The complete genome sequence of Propionibacterium acnes, a commensal of human skin.</title>
        <authorList>
            <person name="Brueggemann H."/>
            <person name="Henne A."/>
            <person name="Hoster F."/>
            <person name="Liesegang H."/>
            <person name="Wiezer A."/>
            <person name="Strittmatter A."/>
            <person name="Hujer S."/>
            <person name="Duerre P."/>
            <person name="Gottschalk G."/>
        </authorList>
    </citation>
    <scope>NUCLEOTIDE SEQUENCE [LARGE SCALE GENOMIC DNA]</scope>
    <source>
        <strain>DSM 16379 / KPA171202</strain>
    </source>
</reference>
<organism>
    <name type="scientific">Cutibacterium acnes (strain DSM 16379 / KPA171202)</name>
    <name type="common">Propionibacterium acnes</name>
    <dbReference type="NCBI Taxonomy" id="267747"/>
    <lineage>
        <taxon>Bacteria</taxon>
        <taxon>Bacillati</taxon>
        <taxon>Actinomycetota</taxon>
        <taxon>Actinomycetes</taxon>
        <taxon>Propionibacteriales</taxon>
        <taxon>Propionibacteriaceae</taxon>
        <taxon>Cutibacterium</taxon>
    </lineage>
</organism>
<gene>
    <name evidence="1" type="primary">fluC2</name>
    <name evidence="1" type="synonym">crcB2</name>
    <name type="ordered locus">PPA0771</name>
</gene>
<feature type="chain" id="PRO_0000110150" description="Fluoride-specific ion channel FluC 2">
    <location>
        <begin position="1"/>
        <end position="123"/>
    </location>
</feature>
<feature type="transmembrane region" description="Helical" evidence="1">
    <location>
        <begin position="1"/>
        <end position="21"/>
    </location>
</feature>
<feature type="transmembrane region" description="Helical" evidence="1">
    <location>
        <begin position="30"/>
        <end position="50"/>
    </location>
</feature>
<feature type="transmembrane region" description="Helical" evidence="1">
    <location>
        <begin position="99"/>
        <end position="119"/>
    </location>
</feature>
<feature type="binding site" evidence="1">
    <location>
        <position position="74"/>
    </location>
    <ligand>
        <name>Na(+)</name>
        <dbReference type="ChEBI" id="CHEBI:29101"/>
        <note>structural</note>
    </ligand>
</feature>
<feature type="binding site" evidence="1">
    <location>
        <position position="77"/>
    </location>
    <ligand>
        <name>Na(+)</name>
        <dbReference type="ChEBI" id="CHEBI:29101"/>
        <note>structural</note>
    </ligand>
</feature>
<accession>Q6A9N9</accession>
<sequence length="123" mass="12554">MTMLWVCLAGGLGAVARFLLDSRINSRFSVPVPLGTLVINVMGSLLLGLITAAALNHLGFSQNLKEPLGTGFCGGFTTFSTASVETARAAYGCGRRVGALHCMGMAIAGVLAAILGLALGSRV</sequence>
<name>FLUC2_CUTAK</name>
<protein>
    <recommendedName>
        <fullName evidence="1">Fluoride-specific ion channel FluC 2</fullName>
    </recommendedName>
</protein>